<evidence type="ECO:0000255" key="1">
    <source>
        <dbReference type="HAMAP-Rule" id="MF_00671"/>
    </source>
</evidence>
<evidence type="ECO:0000256" key="2">
    <source>
        <dbReference type="SAM" id="MobiDB-lite"/>
    </source>
</evidence>
<proteinExistence type="inferred from homology"/>
<dbReference type="EMBL" id="CP000868">
    <property type="protein sequence ID" value="ABX16271.1"/>
    <property type="molecule type" value="Genomic_DNA"/>
</dbReference>
<dbReference type="EMBL" id="AP009385">
    <property type="protein sequence ID" value="BAG42614.1"/>
    <property type="molecule type" value="Genomic_DNA"/>
</dbReference>
<dbReference type="RefSeq" id="WP_012214041.1">
    <property type="nucleotide sequence ID" value="NC_010084.1"/>
</dbReference>
<dbReference type="SMR" id="A9AFQ0"/>
<dbReference type="STRING" id="395019.BMULJ_00651"/>
<dbReference type="KEGG" id="bmj:BMULJ_00651"/>
<dbReference type="KEGG" id="bmu:Bmul_2587"/>
<dbReference type="eggNOG" id="COG0823">
    <property type="taxonomic scope" value="Bacteria"/>
</dbReference>
<dbReference type="HOGENOM" id="CLU_047123_0_0_4"/>
<dbReference type="Proteomes" id="UP000008815">
    <property type="component" value="Chromosome 1"/>
</dbReference>
<dbReference type="GO" id="GO:0042597">
    <property type="term" value="C:periplasmic space"/>
    <property type="evidence" value="ECO:0007669"/>
    <property type="project" value="UniProtKB-SubCell"/>
</dbReference>
<dbReference type="GO" id="GO:0051301">
    <property type="term" value="P:cell division"/>
    <property type="evidence" value="ECO:0007669"/>
    <property type="project" value="UniProtKB-UniRule"/>
</dbReference>
<dbReference type="GO" id="GO:0017038">
    <property type="term" value="P:protein import"/>
    <property type="evidence" value="ECO:0007669"/>
    <property type="project" value="InterPro"/>
</dbReference>
<dbReference type="Gene3D" id="2.120.10.30">
    <property type="entry name" value="TolB, C-terminal domain"/>
    <property type="match status" value="1"/>
</dbReference>
<dbReference type="Gene3D" id="3.40.50.10070">
    <property type="entry name" value="TolB, N-terminal domain"/>
    <property type="match status" value="1"/>
</dbReference>
<dbReference type="HAMAP" id="MF_00671">
    <property type="entry name" value="TolB"/>
    <property type="match status" value="1"/>
</dbReference>
<dbReference type="InterPro" id="IPR011042">
    <property type="entry name" value="6-blade_b-propeller_TolB-like"/>
</dbReference>
<dbReference type="InterPro" id="IPR011659">
    <property type="entry name" value="PD40"/>
</dbReference>
<dbReference type="InterPro" id="IPR014167">
    <property type="entry name" value="Tol-Pal_TolB"/>
</dbReference>
<dbReference type="InterPro" id="IPR007195">
    <property type="entry name" value="TolB_N"/>
</dbReference>
<dbReference type="NCBIfam" id="TIGR02800">
    <property type="entry name" value="propeller_TolB"/>
    <property type="match status" value="1"/>
</dbReference>
<dbReference type="PANTHER" id="PTHR36842:SF1">
    <property type="entry name" value="PROTEIN TOLB"/>
    <property type="match status" value="1"/>
</dbReference>
<dbReference type="PANTHER" id="PTHR36842">
    <property type="entry name" value="PROTEIN TOLB HOMOLOG"/>
    <property type="match status" value="1"/>
</dbReference>
<dbReference type="Pfam" id="PF07676">
    <property type="entry name" value="PD40"/>
    <property type="match status" value="5"/>
</dbReference>
<dbReference type="Pfam" id="PF04052">
    <property type="entry name" value="TolB_N"/>
    <property type="match status" value="1"/>
</dbReference>
<dbReference type="SUPFAM" id="SSF52964">
    <property type="entry name" value="TolB, N-terminal domain"/>
    <property type="match status" value="1"/>
</dbReference>
<dbReference type="SUPFAM" id="SSF69304">
    <property type="entry name" value="Tricorn protease N-terminal domain"/>
    <property type="match status" value="1"/>
</dbReference>
<name>TOLB_BURM1</name>
<gene>
    <name evidence="1" type="primary">tolB</name>
    <name type="ordered locus">Bmul_2587</name>
    <name type="ordered locus">BMULJ_00651</name>
</gene>
<feature type="signal peptide" evidence="1">
    <location>
        <begin position="1"/>
        <end position="26"/>
    </location>
</feature>
<feature type="chain" id="PRO_5000285140" description="Tol-Pal system protein TolB" evidence="1">
    <location>
        <begin position="27"/>
        <end position="431"/>
    </location>
</feature>
<feature type="region of interest" description="Disordered" evidence="2">
    <location>
        <begin position="411"/>
        <end position="431"/>
    </location>
</feature>
<comment type="function">
    <text evidence="1">Part of the Tol-Pal system, which plays a role in outer membrane invagination during cell division and is important for maintaining outer membrane integrity.</text>
</comment>
<comment type="subunit">
    <text evidence="1">The Tol-Pal system is composed of five core proteins: the inner membrane proteins TolA, TolQ and TolR, the periplasmic protein TolB and the outer membrane protein Pal. They form a network linking the inner and outer membranes and the peptidoglycan layer.</text>
</comment>
<comment type="subcellular location">
    <subcellularLocation>
        <location evidence="1">Periplasm</location>
    </subcellularLocation>
</comment>
<comment type="similarity">
    <text evidence="1">Belongs to the TolB family.</text>
</comment>
<accession>A9AFQ0</accession>
<keyword id="KW-0131">Cell cycle</keyword>
<keyword id="KW-0132">Cell division</keyword>
<keyword id="KW-0574">Periplasm</keyword>
<keyword id="KW-1185">Reference proteome</keyword>
<keyword id="KW-0732">Signal</keyword>
<sequence>MSLMTKLGFRALVASCLIAAGSAANAQVNVLITGVGSTQFPIATANFANEAGLPQQVTSIVRADLARSGKFTNIDAGSTPVPETASVDLGAWKAKGANAFVAGSVNHEGNGQYKINFILYDTVKQQSLGGLSLSANDTTLRTAGHKIADYIYQKLLGVRGVFATRLSYVIKTGNRYQLQISDSDGQNARIALSSTEPIISPAWSPSGTKVAYVSFERKKPIVYIHDLPTGRRYMVSDQKGNNSAPAWSPDGNTLAVALSLTGNTQIYSVNSNGGGLRRLTQSSSIDTEPFYSPDGRWIYFTSDRGGAPQIYRMPAQGESAGAAQRVTFTGSYNTSPRVSPDGKLLAYISRTGGGFKLYVQDLQTGAANAITNTNRDESPSFAANGQYILYATQSGGRNVLAAVPSDGSAPPQILSVQGGSVREPSWGPFMQ</sequence>
<protein>
    <recommendedName>
        <fullName evidence="1">Tol-Pal system protein TolB</fullName>
    </recommendedName>
</protein>
<reference key="1">
    <citation type="submission" date="2007-10" db="EMBL/GenBank/DDBJ databases">
        <title>Complete sequence of chromosome 1 of Burkholderia multivorans ATCC 17616.</title>
        <authorList>
            <person name="Copeland A."/>
            <person name="Lucas S."/>
            <person name="Lapidus A."/>
            <person name="Barry K."/>
            <person name="Glavina del Rio T."/>
            <person name="Dalin E."/>
            <person name="Tice H."/>
            <person name="Pitluck S."/>
            <person name="Chain P."/>
            <person name="Malfatti S."/>
            <person name="Shin M."/>
            <person name="Vergez L."/>
            <person name="Schmutz J."/>
            <person name="Larimer F."/>
            <person name="Land M."/>
            <person name="Hauser L."/>
            <person name="Kyrpides N."/>
            <person name="Kim E."/>
            <person name="Tiedje J."/>
            <person name="Richardson P."/>
        </authorList>
    </citation>
    <scope>NUCLEOTIDE SEQUENCE [LARGE SCALE GENOMIC DNA]</scope>
    <source>
        <strain>ATCC 17616 / 249</strain>
    </source>
</reference>
<reference key="2">
    <citation type="submission" date="2007-04" db="EMBL/GenBank/DDBJ databases">
        <title>Complete genome sequence of Burkholderia multivorans ATCC 17616.</title>
        <authorList>
            <person name="Ohtsubo Y."/>
            <person name="Yamashita A."/>
            <person name="Kurokawa K."/>
            <person name="Takami H."/>
            <person name="Yuhara S."/>
            <person name="Nishiyama E."/>
            <person name="Endo R."/>
            <person name="Miyazaki R."/>
            <person name="Ono A."/>
            <person name="Yano K."/>
            <person name="Ito M."/>
            <person name="Sota M."/>
            <person name="Yuji N."/>
            <person name="Hattori M."/>
            <person name="Tsuda M."/>
        </authorList>
    </citation>
    <scope>NUCLEOTIDE SEQUENCE [LARGE SCALE GENOMIC DNA]</scope>
    <source>
        <strain>ATCC 17616 / 249</strain>
    </source>
</reference>
<organism>
    <name type="scientific">Burkholderia multivorans (strain ATCC 17616 / 249)</name>
    <dbReference type="NCBI Taxonomy" id="395019"/>
    <lineage>
        <taxon>Bacteria</taxon>
        <taxon>Pseudomonadati</taxon>
        <taxon>Pseudomonadota</taxon>
        <taxon>Betaproteobacteria</taxon>
        <taxon>Burkholderiales</taxon>
        <taxon>Burkholderiaceae</taxon>
        <taxon>Burkholderia</taxon>
        <taxon>Burkholderia cepacia complex</taxon>
    </lineage>
</organism>